<name>EXP14_ORYSJ</name>
<reference key="1">
    <citation type="journal article" date="2002" name="Plant Physiol.">
        <title>Expression of alpha-expansin and expansin-like genes in deepwater rice.</title>
        <authorList>
            <person name="Lee Y."/>
            <person name="Kende H."/>
        </authorList>
    </citation>
    <scope>NUCLEOTIDE SEQUENCE [GENOMIC DNA]</scope>
</reference>
<reference key="2">
    <citation type="journal article" date="2005" name="Nature">
        <title>The map-based sequence of the rice genome.</title>
        <authorList>
            <consortium name="International rice genome sequencing project (IRGSP)"/>
        </authorList>
    </citation>
    <scope>NUCLEOTIDE SEQUENCE [LARGE SCALE GENOMIC DNA]</scope>
    <source>
        <strain>cv. Nipponbare</strain>
    </source>
</reference>
<reference key="3">
    <citation type="journal article" date="2013" name="Rice">
        <title>Improvement of the Oryza sativa Nipponbare reference genome using next generation sequence and optical map data.</title>
        <authorList>
            <person name="Kawahara Y."/>
            <person name="de la Bastide M."/>
            <person name="Hamilton J.P."/>
            <person name="Kanamori H."/>
            <person name="McCombie W.R."/>
            <person name="Ouyang S."/>
            <person name="Schwartz D.C."/>
            <person name="Tanaka T."/>
            <person name="Wu J."/>
            <person name="Zhou S."/>
            <person name="Childs K.L."/>
            <person name="Davidson R.M."/>
            <person name="Lin H."/>
            <person name="Quesada-Ocampo L."/>
            <person name="Vaillancourt B."/>
            <person name="Sakai H."/>
            <person name="Lee S.S."/>
            <person name="Kim J."/>
            <person name="Numa H."/>
            <person name="Itoh T."/>
            <person name="Buell C.R."/>
            <person name="Matsumoto T."/>
        </authorList>
    </citation>
    <scope>GENOME REANNOTATION</scope>
    <source>
        <strain>cv. Nipponbare</strain>
    </source>
</reference>
<reference key="4">
    <citation type="journal article" date="2005" name="Mol. Cells">
        <title>Characterization and transcriptional expression of the alpha-expansin gene family in rice.</title>
        <authorList>
            <person name="Shin J.-H."/>
            <person name="Jeong D.-H."/>
            <person name="Park M.C."/>
            <person name="An G."/>
        </authorList>
    </citation>
    <scope>NUCLEOTIDE SEQUENCE [MRNA] OF 11-262</scope>
    <source>
        <strain>cv. Dongjin</strain>
    </source>
</reference>
<reference key="5">
    <citation type="journal article" date="2004" name="Plant Mol. Biol.">
        <title>Nomenclature for members of the expansin superfamily of genes and proteins.</title>
        <authorList>
            <person name="Kende H."/>
            <person name="Bradford K.J."/>
            <person name="Brummell D.A."/>
            <person name="Cho H.-T."/>
            <person name="Cosgrove D.J."/>
            <person name="Fleming A.J."/>
            <person name="Gehring C."/>
            <person name="Lee Y."/>
            <person name="McQueen-Mason S.J."/>
            <person name="Rose J.K.C."/>
            <person name="Voesenek L.A.C."/>
        </authorList>
    </citation>
    <scope>NOMENCLATURE</scope>
</reference>
<gene>
    <name type="primary">EXPA14</name>
    <name type="synonym">EXP14</name>
    <name type="ordered locus">Os02g0267700</name>
    <name type="ordered locus">LOC_Os02g16780</name>
    <name type="ORF">P0693E08.10</name>
</gene>
<protein>
    <recommendedName>
        <fullName>Expansin-A14</fullName>
    </recommendedName>
    <alternativeName>
        <fullName>Alpha-expansin-14</fullName>
    </alternativeName>
    <alternativeName>
        <fullName>OsEXP14</fullName>
    </alternativeName>
    <alternativeName>
        <fullName>OsEXPA14</fullName>
    </alternativeName>
    <alternativeName>
        <fullName>OsaEXPa1.11</fullName>
    </alternativeName>
</protein>
<keyword id="KW-0134">Cell wall</keyword>
<keyword id="KW-0961">Cell wall biogenesis/degradation</keyword>
<keyword id="KW-0325">Glycoprotein</keyword>
<keyword id="KW-0472">Membrane</keyword>
<keyword id="KW-1185">Reference proteome</keyword>
<keyword id="KW-0964">Secreted</keyword>
<keyword id="KW-0732">Signal</keyword>
<sequence>MASSPRAFALVFFAIAAVGCTQLTTADDAAPPVWQKAHATFYGGADASGTMGGGCGYGDLYSQGYGTRNAALSTALFNDGASCGQCYKIACDRKRAPQWCKPGVTVTITATNFCPPNWDLPSDNGGWCNPPRPHFDMAQPAWEKIGIYSAGIIPVIYQRVPCIKKGGVRFTINGHDYFNLVLVTNVATTGSIKSMDIMGSNSTDWMPMVRNWGANWHSLSYLTGQTLSFRVTNMDGQTLVFKNIVPSGWKFGQTFTSKLQFK</sequence>
<evidence type="ECO:0000250" key="1"/>
<evidence type="ECO:0000255" key="2"/>
<evidence type="ECO:0000255" key="3">
    <source>
        <dbReference type="PROSITE-ProRule" id="PRU00078"/>
    </source>
</evidence>
<evidence type="ECO:0000255" key="4">
    <source>
        <dbReference type="PROSITE-ProRule" id="PRU00079"/>
    </source>
</evidence>
<evidence type="ECO:0000305" key="5"/>
<comment type="function">
    <text evidence="1">May cause loosening and extension of plant cell walls by disrupting non-covalent bonding between cellulose microfibrils and matrix glucans. No enzymatic activity has been found. May be required for rapid internodal elongation in deepwater rice during submergence (By similarity).</text>
</comment>
<comment type="subcellular location">
    <subcellularLocation>
        <location evidence="1">Secreted</location>
        <location evidence="1">Cell wall</location>
    </subcellularLocation>
    <subcellularLocation>
        <location evidence="1">Membrane</location>
        <topology evidence="1">Peripheral membrane protein</topology>
    </subcellularLocation>
</comment>
<comment type="similarity">
    <text evidence="5">Belongs to the expansin family. Expansin A subfamily.</text>
</comment>
<comment type="online information" name="EXPANSIN homepage">
    <link uri="https://www.dept.psu.edu/biology/groups/expansins/index.htm"/>
</comment>
<feature type="signal peptide" evidence="2">
    <location>
        <begin position="1"/>
        <end position="20"/>
    </location>
</feature>
<feature type="chain" id="PRO_0000251993" description="Expansin-A14">
    <location>
        <begin position="21"/>
        <end position="262"/>
    </location>
</feature>
<feature type="domain" description="Expansin-like EG45" evidence="4">
    <location>
        <begin position="52"/>
        <end position="167"/>
    </location>
</feature>
<feature type="domain" description="Expansin-like CBD" evidence="3">
    <location>
        <begin position="177"/>
        <end position="257"/>
    </location>
</feature>
<feature type="glycosylation site" description="N-linked (GlcNAc...) asparagine" evidence="2">
    <location>
        <position position="201"/>
    </location>
</feature>
<dbReference type="EMBL" id="AF394550">
    <property type="protein sequence ID" value="AAL24486.1"/>
    <property type="molecule type" value="Genomic_DNA"/>
</dbReference>
<dbReference type="EMBL" id="AP005428">
    <property type="protein sequence ID" value="BAD28624.1"/>
    <property type="molecule type" value="Genomic_DNA"/>
</dbReference>
<dbReference type="EMBL" id="AP014958">
    <property type="status" value="NOT_ANNOTATED_CDS"/>
    <property type="molecule type" value="Genomic_DNA"/>
</dbReference>
<dbReference type="EMBL" id="DQ061056">
    <property type="protein sequence ID" value="AAY63547.1"/>
    <property type="molecule type" value="mRNA"/>
</dbReference>
<dbReference type="RefSeq" id="XP_015624733.1">
    <property type="nucleotide sequence ID" value="XM_015769247.1"/>
</dbReference>
<dbReference type="SMR" id="Q4PR51"/>
<dbReference type="FunCoup" id="Q4PR51">
    <property type="interactions" value="12"/>
</dbReference>
<dbReference type="STRING" id="39947.Q4PR51"/>
<dbReference type="GlyCosmos" id="Q4PR51">
    <property type="glycosylation" value="1 site, No reported glycans"/>
</dbReference>
<dbReference type="PaxDb" id="39947-Q4PR51"/>
<dbReference type="eggNOG" id="ENOG502SWQD">
    <property type="taxonomic scope" value="Eukaryota"/>
</dbReference>
<dbReference type="HOGENOM" id="CLU_027462_0_1_1"/>
<dbReference type="InParanoid" id="Q4PR51"/>
<dbReference type="OrthoDB" id="5823761at2759"/>
<dbReference type="Proteomes" id="UP000000763">
    <property type="component" value="Chromosome 2"/>
</dbReference>
<dbReference type="Proteomes" id="UP000059680">
    <property type="component" value="Chromosome 2"/>
</dbReference>
<dbReference type="GO" id="GO:0005576">
    <property type="term" value="C:extracellular region"/>
    <property type="evidence" value="ECO:0007669"/>
    <property type="project" value="UniProtKB-KW"/>
</dbReference>
<dbReference type="GO" id="GO:0016020">
    <property type="term" value="C:membrane"/>
    <property type="evidence" value="ECO:0007669"/>
    <property type="project" value="UniProtKB-SubCell"/>
</dbReference>
<dbReference type="GO" id="GO:0009828">
    <property type="term" value="P:plant-type cell wall loosening"/>
    <property type="evidence" value="ECO:0000250"/>
    <property type="project" value="UniProtKB"/>
</dbReference>
<dbReference type="CDD" id="cd22274">
    <property type="entry name" value="DPBB_EXPA_N"/>
    <property type="match status" value="1"/>
</dbReference>
<dbReference type="FunFam" id="2.40.40.10:FF:000001">
    <property type="entry name" value="Expansin"/>
    <property type="match status" value="1"/>
</dbReference>
<dbReference type="Gene3D" id="2.60.40.760">
    <property type="entry name" value="Expansin, cellulose-binding-like domain"/>
    <property type="match status" value="1"/>
</dbReference>
<dbReference type="Gene3D" id="2.40.40.10">
    <property type="entry name" value="RlpA-like domain"/>
    <property type="match status" value="1"/>
</dbReference>
<dbReference type="InterPro" id="IPR007118">
    <property type="entry name" value="Expan_Lol_pI"/>
</dbReference>
<dbReference type="InterPro" id="IPR002963">
    <property type="entry name" value="Expansin"/>
</dbReference>
<dbReference type="InterPro" id="IPR007112">
    <property type="entry name" value="Expansin/allergen_DPBB_dom"/>
</dbReference>
<dbReference type="InterPro" id="IPR007117">
    <property type="entry name" value="Expansin_CBD"/>
</dbReference>
<dbReference type="InterPro" id="IPR036749">
    <property type="entry name" value="Expansin_CBD_sf"/>
</dbReference>
<dbReference type="InterPro" id="IPR009009">
    <property type="entry name" value="RlpA-like_DPBB"/>
</dbReference>
<dbReference type="InterPro" id="IPR036908">
    <property type="entry name" value="RlpA-like_sf"/>
</dbReference>
<dbReference type="PANTHER" id="PTHR31867">
    <property type="entry name" value="EXPANSIN-A15"/>
    <property type="match status" value="1"/>
</dbReference>
<dbReference type="Pfam" id="PF03330">
    <property type="entry name" value="DPBB_1"/>
    <property type="match status" value="1"/>
</dbReference>
<dbReference type="Pfam" id="PF01357">
    <property type="entry name" value="Expansin_C"/>
    <property type="match status" value="1"/>
</dbReference>
<dbReference type="PRINTS" id="PR01226">
    <property type="entry name" value="EXPANSIN"/>
</dbReference>
<dbReference type="PRINTS" id="PR01225">
    <property type="entry name" value="EXPANSNFAMLY"/>
</dbReference>
<dbReference type="SMART" id="SM00837">
    <property type="entry name" value="DPBB_1"/>
    <property type="match status" value="1"/>
</dbReference>
<dbReference type="SUPFAM" id="SSF50685">
    <property type="entry name" value="Barwin-like endoglucanases"/>
    <property type="match status" value="1"/>
</dbReference>
<dbReference type="SUPFAM" id="SSF49590">
    <property type="entry name" value="PHL pollen allergen"/>
    <property type="match status" value="1"/>
</dbReference>
<dbReference type="PROSITE" id="PS50843">
    <property type="entry name" value="EXPANSIN_CBD"/>
    <property type="match status" value="1"/>
</dbReference>
<dbReference type="PROSITE" id="PS50842">
    <property type="entry name" value="EXPANSIN_EG45"/>
    <property type="match status" value="1"/>
</dbReference>
<organism>
    <name type="scientific">Oryza sativa subsp. japonica</name>
    <name type="common">Rice</name>
    <dbReference type="NCBI Taxonomy" id="39947"/>
    <lineage>
        <taxon>Eukaryota</taxon>
        <taxon>Viridiplantae</taxon>
        <taxon>Streptophyta</taxon>
        <taxon>Embryophyta</taxon>
        <taxon>Tracheophyta</taxon>
        <taxon>Spermatophyta</taxon>
        <taxon>Magnoliopsida</taxon>
        <taxon>Liliopsida</taxon>
        <taxon>Poales</taxon>
        <taxon>Poaceae</taxon>
        <taxon>BOP clade</taxon>
        <taxon>Oryzoideae</taxon>
        <taxon>Oryzeae</taxon>
        <taxon>Oryzinae</taxon>
        <taxon>Oryza</taxon>
        <taxon>Oryza sativa</taxon>
    </lineage>
</organism>
<accession>Q4PR51</accession>
<accession>Q6ERU6</accession>
<accession>Q946I7</accession>
<proteinExistence type="evidence at transcript level"/>